<name>PDX1_HUMAN</name>
<keyword id="KW-0002">3D-structure</keyword>
<keyword id="KW-0010">Activator</keyword>
<keyword id="KW-0963">Cytoplasm</keyword>
<keyword id="KW-0217">Developmental protein</keyword>
<keyword id="KW-0219">Diabetes mellitus</keyword>
<keyword id="KW-0225">Disease variant</keyword>
<keyword id="KW-0238">DNA-binding</keyword>
<keyword id="KW-0371">Homeobox</keyword>
<keyword id="KW-0539">Nucleus</keyword>
<keyword id="KW-0597">Phosphoprotein</keyword>
<keyword id="KW-1267">Proteomics identification</keyword>
<keyword id="KW-1185">Reference proteome</keyword>
<keyword id="KW-0804">Transcription</keyword>
<keyword id="KW-0805">Transcription regulation</keyword>
<sequence length="283" mass="30771">MNGEEQYYAATQLYKDPCAFQRGPAPEFSASPPACLYMGRQPPPPPPHPFPGALGALEQGSPPDISPYEVPPLADDPAVAHLHHHLPAQLALPHPPAGPFPEGAEPGVLEEPNRVQLPFPWMKSTKAHAWKGQWAGGAYAAEPEENKRTRTAYTRAQLLELEKEFLFNKYISRPRRVELAVMLNLTERHIKIWFQNRRMKWKKEEDKKRGGGTAVGGGGVAEPEQDCAVTSGEELLALPPPPPPGGAVPPAAPVAAREGRLPPGLSASPQPSSVAPRRPQEPR</sequence>
<evidence type="ECO:0000250" key="1"/>
<evidence type="ECO:0000250" key="2">
    <source>
        <dbReference type="UniProtKB" id="P52946"/>
    </source>
</evidence>
<evidence type="ECO:0000255" key="3">
    <source>
        <dbReference type="PROSITE-ProRule" id="PRU00108"/>
    </source>
</evidence>
<evidence type="ECO:0000256" key="4">
    <source>
        <dbReference type="SAM" id="MobiDB-lite"/>
    </source>
</evidence>
<evidence type="ECO:0000269" key="5">
    <source>
    </source>
</evidence>
<evidence type="ECO:0000269" key="6">
    <source>
    </source>
</evidence>
<evidence type="ECO:0000269" key="7">
    <source>
    </source>
</evidence>
<evidence type="ECO:0000269" key="8">
    <source>
    </source>
</evidence>
<evidence type="ECO:0000269" key="9">
    <source>
    </source>
</evidence>
<evidence type="ECO:0000269" key="10">
    <source>
    </source>
</evidence>
<evidence type="ECO:0000305" key="11"/>
<proteinExistence type="evidence at protein level"/>
<feature type="chain" id="PRO_0000049147" description="Pancreas/duodenum homeobox protein 1">
    <location>
        <begin position="1"/>
        <end position="283"/>
    </location>
</feature>
<feature type="DNA-binding region" description="Homeobox" evidence="3">
    <location>
        <begin position="146"/>
        <end position="205"/>
    </location>
</feature>
<feature type="region of interest" description="Transactivation domain" evidence="1">
    <location>
        <begin position="13"/>
        <end position="73"/>
    </location>
</feature>
<feature type="region of interest" description="Disordered" evidence="4">
    <location>
        <begin position="34"/>
        <end position="71"/>
    </location>
</feature>
<feature type="region of interest" description="Disordered" evidence="4">
    <location>
        <begin position="201"/>
        <end position="283"/>
    </location>
</feature>
<feature type="short sequence motif" description="Antp-type hexapeptide">
    <location>
        <begin position="118"/>
        <end position="123"/>
    </location>
</feature>
<feature type="short sequence motif" description="Nuclear localization signal" evidence="1">
    <location>
        <begin position="197"/>
        <end position="203"/>
    </location>
</feature>
<feature type="compositionally biased region" description="Pro residues" evidence="4">
    <location>
        <begin position="41"/>
        <end position="50"/>
    </location>
</feature>
<feature type="compositionally biased region" description="Gly residues" evidence="4">
    <location>
        <begin position="211"/>
        <end position="220"/>
    </location>
</feature>
<feature type="compositionally biased region" description="Pro residues" evidence="4">
    <location>
        <begin position="238"/>
        <end position="252"/>
    </location>
</feature>
<feature type="modified residue" description="Phosphothreonine; by PASK" evidence="2">
    <location>
        <position position="151"/>
    </location>
</feature>
<feature type="modified residue" description="Phosphoserine; by HIPK2" evidence="8">
    <location>
        <position position="268"/>
    </location>
</feature>
<feature type="sequence variant" id="VAR_009309" description="Risk factor for type 2 diabetes; dbSNP:rs137852785." evidence="5">
    <original>C</original>
    <variation>R</variation>
    <location>
        <position position="18"/>
    </location>
</feature>
<feature type="sequence variant" id="VAR_009310" description="Risk factor for type 2 diabetes; dbSNP:rs137852784." evidence="6">
    <original>Q</original>
    <variation>L</variation>
    <location>
        <position position="59"/>
    </location>
</feature>
<feature type="sequence variant" id="VAR_009311" description="Risk factor for type 2 diabetes; dbSNP:rs137852783." evidence="5 6">
    <original>D</original>
    <variation>N</variation>
    <location>
        <position position="76"/>
    </location>
</feature>
<feature type="sequence variant" id="VAR_009312" description="Risk factor for type 2 diabetes; dbSNP:rs137852786." evidence="5">
    <original>R</original>
    <variation>H</variation>
    <location>
        <position position="197"/>
    </location>
</feature>
<feature type="sequence variant" id="VAR_009313" description="Risk factor for type 2 diabetes." evidence="6">
    <original>P</original>
    <variation>PP</variation>
    <location>
        <position position="243"/>
    </location>
</feature>
<feature type="sequence conflict" description="In Ref. 6; AAC05157." evidence="11" ref="6">
    <original>A</original>
    <variation>S</variation>
    <location>
        <position position="56"/>
    </location>
</feature>
<feature type="sequence conflict" description="In Ref. 6; AAC05157." evidence="11" ref="6">
    <original>Q</original>
    <variation>H</variation>
    <location>
        <position position="116"/>
    </location>
</feature>
<feature type="sequence conflict" description="In Ref. 6; AAC05157." evidence="11" ref="6">
    <original>GG</original>
    <variation>SS</variation>
    <location>
        <begin position="210"/>
        <end position="211"/>
    </location>
</feature>
<gene>
    <name type="primary">PDX1</name>
    <name type="synonym">IPF1</name>
    <name type="synonym">STF1</name>
</gene>
<comment type="function">
    <text>Activates insulin, somatostatin, glucokinase, islet amyloid polypeptide and glucose transporter type 2 gene transcription. Particularly involved in glucose-dependent regulation of insulin gene transcription. As part of a PDX1:PBX1b:MEIS2b complex in pancreatic acinar cells is involved in the transcriptional activation of the ELA1 enhancer; the complex binds to the enhancer B element and cooperates with the transcription factor 1 complex (PTF1) bound to the enhancer A element. Binds preferentially the DNA motif 5'-[CT]TAAT[TG]-3'. During development, specifies the early pancreatic epithelium, permitting its proliferation, branching and subsequent differentiation. At adult stage, required for maintaining the hormone-producing phenotype of the beta-cell.</text>
</comment>
<comment type="subunit">
    <text evidence="1 7">Interacts with the basic helix-loop-helix domains of TCF3(E47) and NEUROD1 and with HMG-I(Y). Interacts with SPOP (By similarity). Interacts with the methyltransferase SETD7. Part of a PDX1:PBX1b:MEIS2b complex.</text>
</comment>
<comment type="subcellular location">
    <subcellularLocation>
        <location>Nucleus</location>
    </subcellularLocation>
    <subcellularLocation>
        <location evidence="1">Cytoplasm</location>
        <location evidence="1">Cytosol</location>
    </subcellularLocation>
</comment>
<comment type="tissue specificity">
    <text>Duodenum and pancreas (Langerhans islet beta cells and small subsets of endocrine non-beta-cells, at low levels in acinar cells).</text>
</comment>
<comment type="domain">
    <text evidence="1">The Antp-type hexapeptide mediates heterodimerization with PBX on a regulatory element of the somatostatin promoter.</text>
</comment>
<comment type="domain">
    <text evidence="1">The homeodomain, which contains the nuclear localization signal, not only mediates DNA-binding, but also acts as a protein-protein interaction domain for TCF3(E47), NEUROD1 and HMG-I(Y).</text>
</comment>
<comment type="PTM">
    <text evidence="1">Phosphorylated by the SAPK2 pathway at high intracellular glucose concentration. Phosphorylated by HIPK2 on Ser-268 upon glucose accumulation. This phosphorylation mediates subnuclear localization shifting. Phosphorylation by PASK may lead to translocation into the cytosol (By similarity).</text>
</comment>
<comment type="disease" evidence="9">
    <disease id="DI-02123">
        <name>Pancreatic agenesis 1</name>
        <acronym>PAGEN1</acronym>
        <description>A disease characterized by isolated hypoplasia or agenesis of the pancreas, pancreatic beta-cell failure resulting in neonatal insulin-dependent diabetes mellitus, and exocrine pancreatic insufficiency.</description>
        <dbReference type="MIM" id="260370"/>
    </disease>
    <text>The disease is caused by variants affecting the gene represented in this entry.</text>
</comment>
<comment type="disease" evidence="5 6">
    <disease id="DI-02060">
        <name>Type 2 diabetes mellitus</name>
        <acronym>T2D</acronym>
        <description>A multifactorial disorder of glucose homeostasis caused by a lack of sensitivity to insulin. Affected individuals usually have an obese body habitus and manifestations of a metabolic syndrome characterized by diabetes, insulin resistance, hypertension and hypertriglyceridemia. The disease results in long-term complications that affect the eyes, kidneys, nerves, and blood vessels.</description>
        <dbReference type="MIM" id="125853"/>
    </disease>
    <text>Disease susceptibility is associated with variants affecting the gene represented in this entry.</text>
</comment>
<comment type="disease" evidence="10">
    <disease id="DI-01946">
        <name>Maturity-onset diabetes of the young 4</name>
        <acronym>MODY4</acronym>
        <description>A form of diabetes that is characterized by an autosomal dominant mode of inheritance, onset in childhood or early adulthood (usually before 25 years of age), a primary defect in insulin secretion and frequent insulin-independence at the beginning of the disease.</description>
        <dbReference type="MIM" id="606392"/>
    </disease>
    <text>The disease is caused by variants affecting the gene represented in this entry.</text>
</comment>
<comment type="miscellaneous">
    <text evidence="7">According to PubMed:16141209, it may be methylated by SETD7 in vitro. However, the relevance of methylation is unsure in vivo.</text>
</comment>
<comment type="similarity">
    <text evidence="11">Belongs to the Antp homeobox family. IPF1/XlHbox-8 subfamily.</text>
</comment>
<comment type="online information" name="Atlas of Genetics and Cytogenetics in Oncology and Haematology">
    <link uri="https://atlasgeneticsoncology.org/gene/43921/PDX1"/>
</comment>
<accession>P52945</accession>
<accession>O60594</accession>
<accession>Q5VYW2</accession>
<reference key="1">
    <citation type="journal article" date="1995" name="Genomics">
        <title>Localization of human homeodomain transcription factor insulin promoter factor 1 (IPF1) to chromosome band 13q12.1.</title>
        <authorList>
            <person name="Stoffel M."/>
            <person name="Stein R."/>
            <person name="Wright C.V."/>
            <person name="Espinosa R. III"/>
            <person name="le Beau M.M."/>
            <person name="Bell G.I."/>
        </authorList>
    </citation>
    <scope>NUCLEOTIDE SEQUENCE [MRNA]</scope>
</reference>
<reference key="2">
    <citation type="journal article" date="1996" name="Diabetes">
        <title>Isolation, characterization, and chromosomal mapping of the human insulin promoter factor 1 (IPF-1) gene.</title>
        <authorList>
            <person name="Inoue H."/>
            <person name="Riggs A.C."/>
            <person name="Tanizawa Y."/>
            <person name="Ueda K."/>
            <person name="Kuwano A."/>
            <person name="Liu L."/>
            <person name="Donis-Keller H."/>
            <person name="Permutt M.A."/>
        </authorList>
    </citation>
    <scope>NUCLEOTIDE SEQUENCE [GENOMIC DNA]</scope>
    <source>
        <tissue>Pancreatic islet</tissue>
    </source>
</reference>
<reference key="3">
    <citation type="submission" date="1995-06" db="EMBL/GenBank/DDBJ databases">
        <authorList>
            <person name="Hiroshi I."/>
        </authorList>
    </citation>
    <scope>NUCLEOTIDE SEQUENCE [MRNA]</scope>
    <source>
        <tissue>Pancreatic islet</tissue>
    </source>
</reference>
<reference key="4">
    <citation type="submission" date="1996-08" db="EMBL/GenBank/DDBJ databases">
        <authorList>
            <person name="Marshak S."/>
            <person name="Totary H."/>
            <person name="Cerasi E."/>
            <person name="Melloul D."/>
        </authorList>
    </citation>
    <scope>NUCLEOTIDE SEQUENCE [MRNA]</scope>
    <source>
        <tissue>Pancreatic islet</tissue>
    </source>
</reference>
<reference key="5">
    <citation type="submission" date="1997-12" db="EMBL/GenBank/DDBJ databases">
        <authorList>
            <person name="Hara M."/>
            <person name="Lindner T.H."/>
            <person name="Paz V.P."/>
            <person name="Wang X."/>
            <person name="Iwasaki N."/>
            <person name="Bell G.I."/>
        </authorList>
    </citation>
    <scope>NUCLEOTIDE SEQUENCE [GENOMIC DNA]</scope>
</reference>
<reference key="6">
    <citation type="journal article" date="1997" name="J. Biol. Chem.">
        <title>The p38/reactivating kinase mitogen-activated protein kinase cascade mediates the activation of the transcription factor insulin upstream factor 1 and insulin gene transcription by high glucose in pancreatic beta-cells.</title>
        <authorList>
            <person name="Macfarlane W.M."/>
            <person name="Smith S.B."/>
            <person name="James R.F."/>
            <person name="Clifton A.D."/>
            <person name="Doza Y.N."/>
            <person name="Cohen P."/>
            <person name="Docherty K."/>
        </authorList>
    </citation>
    <scope>NUCLEOTIDE SEQUENCE [MRNA]</scope>
    <source>
        <tissue>Pancreatic islet</tissue>
    </source>
</reference>
<reference key="7">
    <citation type="journal article" date="2004" name="Nature">
        <title>The DNA sequence and analysis of human chromosome 13.</title>
        <authorList>
            <person name="Dunham A."/>
            <person name="Matthews L.H."/>
            <person name="Burton J."/>
            <person name="Ashurst J.L."/>
            <person name="Howe K.L."/>
            <person name="Ashcroft K.J."/>
            <person name="Beare D.M."/>
            <person name="Burford D.C."/>
            <person name="Hunt S.E."/>
            <person name="Griffiths-Jones S."/>
            <person name="Jones M.C."/>
            <person name="Keenan S.J."/>
            <person name="Oliver K."/>
            <person name="Scott C.E."/>
            <person name="Ainscough R."/>
            <person name="Almeida J.P."/>
            <person name="Ambrose K.D."/>
            <person name="Andrews D.T."/>
            <person name="Ashwell R.I.S."/>
            <person name="Babbage A.K."/>
            <person name="Bagguley C.L."/>
            <person name="Bailey J."/>
            <person name="Bannerjee R."/>
            <person name="Barlow K.F."/>
            <person name="Bates K."/>
            <person name="Beasley H."/>
            <person name="Bird C.P."/>
            <person name="Bray-Allen S."/>
            <person name="Brown A.J."/>
            <person name="Brown J.Y."/>
            <person name="Burrill W."/>
            <person name="Carder C."/>
            <person name="Carter N.P."/>
            <person name="Chapman J.C."/>
            <person name="Clamp M.E."/>
            <person name="Clark S.Y."/>
            <person name="Clarke G."/>
            <person name="Clee C.M."/>
            <person name="Clegg S.C."/>
            <person name="Cobley V."/>
            <person name="Collins J.E."/>
            <person name="Corby N."/>
            <person name="Coville G.J."/>
            <person name="Deloukas P."/>
            <person name="Dhami P."/>
            <person name="Dunham I."/>
            <person name="Dunn M."/>
            <person name="Earthrowl M.E."/>
            <person name="Ellington A.G."/>
            <person name="Faulkner L."/>
            <person name="Frankish A.G."/>
            <person name="Frankland J."/>
            <person name="French L."/>
            <person name="Garner P."/>
            <person name="Garnett J."/>
            <person name="Gilbert J.G.R."/>
            <person name="Gilson C.J."/>
            <person name="Ghori J."/>
            <person name="Grafham D.V."/>
            <person name="Gribble S.M."/>
            <person name="Griffiths C."/>
            <person name="Hall R.E."/>
            <person name="Hammond S."/>
            <person name="Harley J.L."/>
            <person name="Hart E.A."/>
            <person name="Heath P.D."/>
            <person name="Howden P.J."/>
            <person name="Huckle E.J."/>
            <person name="Hunt P.J."/>
            <person name="Hunt A.R."/>
            <person name="Johnson C."/>
            <person name="Johnson D."/>
            <person name="Kay M."/>
            <person name="Kimberley A.M."/>
            <person name="King A."/>
            <person name="Laird G.K."/>
            <person name="Langford C.J."/>
            <person name="Lawlor S."/>
            <person name="Leongamornlert D.A."/>
            <person name="Lloyd D.M."/>
            <person name="Lloyd C."/>
            <person name="Loveland J.E."/>
            <person name="Lovell J."/>
            <person name="Martin S."/>
            <person name="Mashreghi-Mohammadi M."/>
            <person name="McLaren S.J."/>
            <person name="McMurray A."/>
            <person name="Milne S."/>
            <person name="Moore M.J.F."/>
            <person name="Nickerson T."/>
            <person name="Palmer S.A."/>
            <person name="Pearce A.V."/>
            <person name="Peck A.I."/>
            <person name="Pelan S."/>
            <person name="Phillimore B."/>
            <person name="Porter K.M."/>
            <person name="Rice C.M."/>
            <person name="Searle S."/>
            <person name="Sehra H.K."/>
            <person name="Shownkeen R."/>
            <person name="Skuce C.D."/>
            <person name="Smith M."/>
            <person name="Steward C.A."/>
            <person name="Sycamore N."/>
            <person name="Tester J."/>
            <person name="Thomas D.W."/>
            <person name="Tracey A."/>
            <person name="Tromans A."/>
            <person name="Tubby B."/>
            <person name="Wall M."/>
            <person name="Wallis J.M."/>
            <person name="West A.P."/>
            <person name="Whitehead S.L."/>
            <person name="Willey D.L."/>
            <person name="Wilming L."/>
            <person name="Wray P.W."/>
            <person name="Wright M.W."/>
            <person name="Young L."/>
            <person name="Coulson A."/>
            <person name="Durbin R.M."/>
            <person name="Hubbard T."/>
            <person name="Sulston J.E."/>
            <person name="Beck S."/>
            <person name="Bentley D.R."/>
            <person name="Rogers J."/>
            <person name="Ross M.T."/>
        </authorList>
    </citation>
    <scope>NUCLEOTIDE SEQUENCE [LARGE SCALE GENOMIC DNA]</scope>
</reference>
<reference key="8">
    <citation type="submission" date="2005-07" db="EMBL/GenBank/DDBJ databases">
        <authorList>
            <person name="Mural R.J."/>
            <person name="Istrail S."/>
            <person name="Sutton G.G."/>
            <person name="Florea L."/>
            <person name="Halpern A.L."/>
            <person name="Mobarry C.M."/>
            <person name="Lippert R."/>
            <person name="Walenz B."/>
            <person name="Shatkay H."/>
            <person name="Dew I."/>
            <person name="Miller J.R."/>
            <person name="Flanigan M.J."/>
            <person name="Edwards N.J."/>
            <person name="Bolanos R."/>
            <person name="Fasulo D."/>
            <person name="Halldorsson B.V."/>
            <person name="Hannenhalli S."/>
            <person name="Turner R."/>
            <person name="Yooseph S."/>
            <person name="Lu F."/>
            <person name="Nusskern D.R."/>
            <person name="Shue B.C."/>
            <person name="Zheng X.H."/>
            <person name="Zhong F."/>
            <person name="Delcher A.L."/>
            <person name="Huson D.H."/>
            <person name="Kravitz S.A."/>
            <person name="Mouchard L."/>
            <person name="Reinert K."/>
            <person name="Remington K.A."/>
            <person name="Clark A.G."/>
            <person name="Waterman M.S."/>
            <person name="Eichler E.E."/>
            <person name="Adams M.D."/>
            <person name="Hunkapiller M.W."/>
            <person name="Myers E.W."/>
            <person name="Venter J.C."/>
        </authorList>
    </citation>
    <scope>NUCLEOTIDE SEQUENCE [LARGE SCALE GENOMIC DNA]</scope>
</reference>
<reference key="9">
    <citation type="journal article" date="1997" name="Nat. Genet.">
        <title>Pancreatic agenesis attributable to a single nucleotide deletion in the human IPF1 gene coding sequence.</title>
        <authorList>
            <person name="Stoffers D.A."/>
            <person name="Zinkin N.T."/>
            <person name="Stanojevic V."/>
            <person name="Clarke W.L."/>
            <person name="Habener J.F."/>
        </authorList>
    </citation>
    <scope>INVOLVEMENT IN PAGEN1</scope>
</reference>
<reference key="10">
    <citation type="journal article" date="1997" name="Nat. Genet.">
        <title>Early-onset type-II diabetes mellitus (MODY4) linked to IPF1.</title>
        <authorList>
            <person name="Stoffers D.A."/>
            <person name="Ferrer J."/>
            <person name="Clarke W.L."/>
            <person name="Habener J.F."/>
        </authorList>
    </citation>
    <scope>INVOLVEMENT IN MODY4</scope>
</reference>
<reference key="11">
    <citation type="journal article" date="2005" name="J. Biol. Chem.">
        <title>Pdx-1 links histone H3-Lys-4 methylation to RNA polymerase II elongation during activation of insulin transcription.</title>
        <authorList>
            <person name="Francis J."/>
            <person name="Chakrabarti S.K."/>
            <person name="Garmey J.C."/>
            <person name="Mirmira R.G."/>
        </authorList>
    </citation>
    <scope>INTERACTION WITH SETD7</scope>
</reference>
<reference key="12">
    <citation type="journal article" date="2010" name="Biochem. Biophys. Res. Commun.">
        <title>Pancreatic and duodenal homeobox 1 (PDX1) phosphorylation at serine-269 is HIPK2-dependent and affects PDX1 subnuclear localization.</title>
        <authorList>
            <person name="An R."/>
            <person name="da Silva Xavier G."/>
            <person name="Semplici F."/>
            <person name="Vakhshouri S."/>
            <person name="Hao H.X."/>
            <person name="Rutter J."/>
            <person name="Pagano M.A."/>
            <person name="Meggio F."/>
            <person name="Pinna L.A."/>
            <person name="Rutter G.A."/>
        </authorList>
    </citation>
    <scope>PHOSPHORYLATION AT SER-268 BY HIPK2</scope>
</reference>
<reference key="13">
    <citation type="journal article" date="1999" name="J. Clin. Invest.">
        <title>Missense mutations in the insulin promoter factor-1 gene predispose to type 2 diabetes.</title>
        <authorList>
            <person name="Macfarlane W.M."/>
            <person name="Frayling T.M."/>
            <person name="Ellard S."/>
            <person name="Evans J.C."/>
            <person name="Allen L.I."/>
            <person name="Bulman M.P."/>
            <person name="Ayres S."/>
            <person name="Shepherd M."/>
            <person name="Clark P."/>
            <person name="Millward A."/>
            <person name="Demaine A."/>
            <person name="Wilkin T."/>
            <person name="Docherty K."/>
            <person name="Hattersley A.T."/>
        </authorList>
    </citation>
    <scope>VARIANTS ARG-18; ASN-76 AND HIS-197</scope>
    <scope>INVOLVEMENT IN T2D</scope>
</reference>
<reference key="14">
    <citation type="journal article" date="1999" name="J. Clin. Invest.">
        <title>Defective mutations in the insulin promoter factor-1 (IPF-1) gene in late-onset type 2 diabetes mellitus.</title>
        <authorList>
            <person name="Hani E.H."/>
            <person name="Stoffers D.A."/>
            <person name="Chevre J.-C."/>
            <person name="Durand E."/>
            <person name="Stanojevic V."/>
            <person name="Dina C."/>
            <person name="Habener J.F."/>
            <person name="Froguel P."/>
        </authorList>
    </citation>
    <scope>VARIANTS LEU-59; ASN-76 AND PRO-243 INS</scope>
    <scope>INVOLVEMENT IN T2D</scope>
</reference>
<protein>
    <recommendedName>
        <fullName>Pancreas/duodenum homeobox protein 1</fullName>
        <shortName>PDX-1</shortName>
    </recommendedName>
    <alternativeName>
        <fullName>Glucose-sensitive factor</fullName>
        <shortName>GSF</shortName>
    </alternativeName>
    <alternativeName>
        <fullName>Insulin promoter factor 1</fullName>
        <shortName>IPF-1</shortName>
    </alternativeName>
    <alternativeName>
        <fullName>Insulin upstream factor 1</fullName>
        <shortName>IUF-1</shortName>
    </alternativeName>
    <alternativeName>
        <fullName>Islet/duodenum homeobox-1</fullName>
        <shortName>IDX-1</shortName>
    </alternativeName>
    <alternativeName>
        <fullName>Somatostatin-transactivating factor 1</fullName>
        <shortName>STF-1</shortName>
    </alternativeName>
</protein>
<organism>
    <name type="scientific">Homo sapiens</name>
    <name type="common">Human</name>
    <dbReference type="NCBI Taxonomy" id="9606"/>
    <lineage>
        <taxon>Eukaryota</taxon>
        <taxon>Metazoa</taxon>
        <taxon>Chordata</taxon>
        <taxon>Craniata</taxon>
        <taxon>Vertebrata</taxon>
        <taxon>Euteleostomi</taxon>
        <taxon>Mammalia</taxon>
        <taxon>Eutheria</taxon>
        <taxon>Euarchontoglires</taxon>
        <taxon>Primates</taxon>
        <taxon>Haplorrhini</taxon>
        <taxon>Catarrhini</taxon>
        <taxon>Hominidae</taxon>
        <taxon>Homo</taxon>
    </lineage>
</organism>
<dbReference type="EMBL" id="U35632">
    <property type="protein sequence ID" value="AAA88820.1"/>
    <property type="molecule type" value="mRNA"/>
</dbReference>
<dbReference type="EMBL" id="S82178">
    <property type="protein sequence ID" value="AAB47101.1"/>
    <property type="molecule type" value="Genomic_DNA"/>
</dbReference>
<dbReference type="EMBL" id="S82168">
    <property type="protein sequence ID" value="AAB47101.1"/>
    <property type="status" value="JOINED"/>
    <property type="molecule type" value="Genomic_DNA"/>
</dbReference>
<dbReference type="EMBL" id="U30329">
    <property type="protein sequence ID" value="AAA74012.1"/>
    <property type="molecule type" value="mRNA"/>
</dbReference>
<dbReference type="EMBL" id="X99894">
    <property type="protein sequence ID" value="CAA68169.1"/>
    <property type="molecule type" value="mRNA"/>
</dbReference>
<dbReference type="EMBL" id="AF035260">
    <property type="protein sequence ID" value="AAB88463.1"/>
    <property type="molecule type" value="Genomic_DNA"/>
</dbReference>
<dbReference type="EMBL" id="AF035259">
    <property type="protein sequence ID" value="AAB88463.1"/>
    <property type="status" value="JOINED"/>
    <property type="molecule type" value="Genomic_DNA"/>
</dbReference>
<dbReference type="EMBL" id="AF049893">
    <property type="protein sequence ID" value="AAC05157.1"/>
    <property type="molecule type" value="mRNA"/>
</dbReference>
<dbReference type="EMBL" id="AL353195">
    <property type="status" value="NOT_ANNOTATED_CDS"/>
    <property type="molecule type" value="Genomic_DNA"/>
</dbReference>
<dbReference type="EMBL" id="CH471075">
    <property type="protein sequence ID" value="EAX08420.1"/>
    <property type="molecule type" value="Genomic_DNA"/>
</dbReference>
<dbReference type="CCDS" id="CCDS9327.1"/>
<dbReference type="PIR" id="G01926">
    <property type="entry name" value="G01926"/>
</dbReference>
<dbReference type="RefSeq" id="NP_000200.1">
    <property type="nucleotide sequence ID" value="NM_000209.4"/>
</dbReference>
<dbReference type="PDB" id="6F8F">
    <property type="method" value="X-ray"/>
    <property type="resolution" value="2.00 A"/>
    <property type="chains" value="G=223-233"/>
</dbReference>
<dbReference type="PDB" id="7KPK">
    <property type="method" value="X-ray"/>
    <property type="resolution" value="1.71 A"/>
    <property type="chains" value="B=265-283"/>
</dbReference>
<dbReference type="PDBsum" id="6F8F"/>
<dbReference type="PDBsum" id="7KPK"/>
<dbReference type="BMRB" id="P52945"/>
<dbReference type="SMR" id="P52945"/>
<dbReference type="BioGRID" id="109860">
    <property type="interactions" value="17"/>
</dbReference>
<dbReference type="CORUM" id="P52945"/>
<dbReference type="ELM" id="P52945"/>
<dbReference type="FunCoup" id="P52945">
    <property type="interactions" value="1315"/>
</dbReference>
<dbReference type="IntAct" id="P52945">
    <property type="interactions" value="6"/>
</dbReference>
<dbReference type="MINT" id="P52945"/>
<dbReference type="STRING" id="9606.ENSP00000370421"/>
<dbReference type="iPTMnet" id="P52945"/>
<dbReference type="PhosphoSitePlus" id="P52945"/>
<dbReference type="BioMuta" id="PDX1"/>
<dbReference type="DMDM" id="1708540"/>
<dbReference type="jPOST" id="P52945"/>
<dbReference type="MassIVE" id="P52945"/>
<dbReference type="PaxDb" id="9606-ENSP00000370421"/>
<dbReference type="PeptideAtlas" id="P52945"/>
<dbReference type="ProteomicsDB" id="56554"/>
<dbReference type="Pumba" id="P52945"/>
<dbReference type="Antibodypedia" id="22687">
    <property type="antibodies" value="904 antibodies from 40 providers"/>
</dbReference>
<dbReference type="DNASU" id="3651"/>
<dbReference type="Ensembl" id="ENST00000381033.5">
    <property type="protein sequence ID" value="ENSP00000370421.4"/>
    <property type="gene ID" value="ENSG00000139515.6"/>
</dbReference>
<dbReference type="GeneID" id="3651"/>
<dbReference type="KEGG" id="hsa:3651"/>
<dbReference type="MANE-Select" id="ENST00000381033.5">
    <property type="protein sequence ID" value="ENSP00000370421.4"/>
    <property type="RefSeq nucleotide sequence ID" value="NM_000209.4"/>
    <property type="RefSeq protein sequence ID" value="NP_000200.1"/>
</dbReference>
<dbReference type="UCSC" id="uc001urt.3">
    <property type="organism name" value="human"/>
</dbReference>
<dbReference type="AGR" id="HGNC:6107"/>
<dbReference type="CTD" id="3651"/>
<dbReference type="DisGeNET" id="3651"/>
<dbReference type="GeneCards" id="PDX1"/>
<dbReference type="GeneReviews" id="PDX1"/>
<dbReference type="HGNC" id="HGNC:6107">
    <property type="gene designation" value="PDX1"/>
</dbReference>
<dbReference type="HPA" id="ENSG00000139515">
    <property type="expression patterns" value="Group enriched (intestine, pancreas)"/>
</dbReference>
<dbReference type="MalaCards" id="PDX1"/>
<dbReference type="MIM" id="125853">
    <property type="type" value="phenotype"/>
</dbReference>
<dbReference type="MIM" id="260370">
    <property type="type" value="phenotype"/>
</dbReference>
<dbReference type="MIM" id="600733">
    <property type="type" value="gene"/>
</dbReference>
<dbReference type="MIM" id="606392">
    <property type="type" value="phenotype"/>
</dbReference>
<dbReference type="neXtProt" id="NX_P52945"/>
<dbReference type="OpenTargets" id="ENSG00000139515"/>
<dbReference type="Orphanet" id="99885">
    <property type="disease" value="Isolated permanent neonatal diabetes mellitus"/>
</dbReference>
<dbReference type="Orphanet" id="552">
    <property type="disease" value="MODY"/>
</dbReference>
<dbReference type="Orphanet" id="2805">
    <property type="disease" value="Partial pancreatic agenesis"/>
</dbReference>
<dbReference type="PharmGKB" id="PA162399173"/>
<dbReference type="VEuPathDB" id="HostDB:ENSG00000139515"/>
<dbReference type="eggNOG" id="KOG0489">
    <property type="taxonomic scope" value="Eukaryota"/>
</dbReference>
<dbReference type="GeneTree" id="ENSGT00940000162542"/>
<dbReference type="HOGENOM" id="CLU_087401_0_0_1"/>
<dbReference type="InParanoid" id="P52945"/>
<dbReference type="OMA" id="SHSHTWK"/>
<dbReference type="OrthoDB" id="6159439at2759"/>
<dbReference type="PAN-GO" id="P52945">
    <property type="GO annotations" value="5 GO annotations based on evolutionary models"/>
</dbReference>
<dbReference type="PhylomeDB" id="P52945"/>
<dbReference type="TreeFam" id="TF326223"/>
<dbReference type="PathwayCommons" id="P52945"/>
<dbReference type="Reactome" id="R-HSA-210745">
    <property type="pathway name" value="Regulation of gene expression in beta cells"/>
</dbReference>
<dbReference type="Reactome" id="R-HSA-210747">
    <property type="pathway name" value="Regulation of gene expression in early pancreatic precursor cells"/>
</dbReference>
<dbReference type="Reactome" id="R-HSA-9925561">
    <property type="pathway name" value="Developmental Lineage of Pancreatic Acinar Cells"/>
</dbReference>
<dbReference type="SignaLink" id="P52945"/>
<dbReference type="SIGNOR" id="P52945"/>
<dbReference type="BioGRID-ORCS" id="3651">
    <property type="hits" value="10 hits in 1167 CRISPR screens"/>
</dbReference>
<dbReference type="ChiTaRS" id="PDX1">
    <property type="organism name" value="human"/>
</dbReference>
<dbReference type="GeneWiki" id="PDX1"/>
<dbReference type="GenomeRNAi" id="3651"/>
<dbReference type="Pharos" id="P52945">
    <property type="development level" value="Tbio"/>
</dbReference>
<dbReference type="PRO" id="PR:P52945"/>
<dbReference type="Proteomes" id="UP000005640">
    <property type="component" value="Chromosome 13"/>
</dbReference>
<dbReference type="RNAct" id="P52945">
    <property type="molecule type" value="protein"/>
</dbReference>
<dbReference type="Bgee" id="ENSG00000139515">
    <property type="expression patterns" value="Expressed in islet of Langerhans and 29 other cell types or tissues"/>
</dbReference>
<dbReference type="GO" id="GO:0000785">
    <property type="term" value="C:chromatin"/>
    <property type="evidence" value="ECO:0000247"/>
    <property type="project" value="NTNU_SB"/>
</dbReference>
<dbReference type="GO" id="GO:0005829">
    <property type="term" value="C:cytosol"/>
    <property type="evidence" value="ECO:0007669"/>
    <property type="project" value="UniProtKB-SubCell"/>
</dbReference>
<dbReference type="GO" id="GO:0016607">
    <property type="term" value="C:nuclear speck"/>
    <property type="evidence" value="ECO:0007669"/>
    <property type="project" value="Ensembl"/>
</dbReference>
<dbReference type="GO" id="GO:0005654">
    <property type="term" value="C:nucleoplasm"/>
    <property type="evidence" value="ECO:0000314"/>
    <property type="project" value="HPA"/>
</dbReference>
<dbReference type="GO" id="GO:0005634">
    <property type="term" value="C:nucleus"/>
    <property type="evidence" value="ECO:0000318"/>
    <property type="project" value="GO_Central"/>
</dbReference>
<dbReference type="GO" id="GO:0001228">
    <property type="term" value="F:DNA-binding transcription activator activity, RNA polymerase II-specific"/>
    <property type="evidence" value="ECO:0000250"/>
    <property type="project" value="BHF-UCL"/>
</dbReference>
<dbReference type="GO" id="GO:0003700">
    <property type="term" value="F:DNA-binding transcription factor activity"/>
    <property type="evidence" value="ECO:0000314"/>
    <property type="project" value="BHF-UCL"/>
</dbReference>
<dbReference type="GO" id="GO:0000981">
    <property type="term" value="F:DNA-binding transcription factor activity, RNA polymerase II-specific"/>
    <property type="evidence" value="ECO:0000247"/>
    <property type="project" value="NTNU_SB"/>
</dbReference>
<dbReference type="GO" id="GO:1990841">
    <property type="term" value="F:promoter-specific chromatin binding"/>
    <property type="evidence" value="ECO:0007669"/>
    <property type="project" value="Ensembl"/>
</dbReference>
<dbReference type="GO" id="GO:0044877">
    <property type="term" value="F:protein-containing complex binding"/>
    <property type="evidence" value="ECO:0007669"/>
    <property type="project" value="Ensembl"/>
</dbReference>
<dbReference type="GO" id="GO:0000978">
    <property type="term" value="F:RNA polymerase II cis-regulatory region sequence-specific DNA binding"/>
    <property type="evidence" value="ECO:0000318"/>
    <property type="project" value="GO_Central"/>
</dbReference>
<dbReference type="GO" id="GO:0061629">
    <property type="term" value="F:RNA polymerase II-specific DNA-binding transcription factor binding"/>
    <property type="evidence" value="ECO:0000250"/>
    <property type="project" value="BHF-UCL"/>
</dbReference>
<dbReference type="GO" id="GO:1990837">
    <property type="term" value="F:sequence-specific double-stranded DNA binding"/>
    <property type="evidence" value="ECO:0000314"/>
    <property type="project" value="ARUK-UCL"/>
</dbReference>
<dbReference type="GO" id="GO:0009887">
    <property type="term" value="P:animal organ morphogenesis"/>
    <property type="evidence" value="ECO:0000304"/>
    <property type="project" value="ProtInc"/>
</dbReference>
<dbReference type="GO" id="GO:0031100">
    <property type="term" value="P:animal organ regeneration"/>
    <property type="evidence" value="ECO:0007669"/>
    <property type="project" value="Ensembl"/>
</dbReference>
<dbReference type="GO" id="GO:0048565">
    <property type="term" value="P:digestive tract development"/>
    <property type="evidence" value="ECO:0007669"/>
    <property type="project" value="Ensembl"/>
</dbReference>
<dbReference type="GO" id="GO:0031017">
    <property type="term" value="P:exocrine pancreas development"/>
    <property type="evidence" value="ECO:0007669"/>
    <property type="project" value="Ensembl"/>
</dbReference>
<dbReference type="GO" id="GO:0006091">
    <property type="term" value="P:generation of precursor metabolites and energy"/>
    <property type="evidence" value="ECO:0000304"/>
    <property type="project" value="ProtInc"/>
</dbReference>
<dbReference type="GO" id="GO:0010255">
    <property type="term" value="P:glucose mediated signaling pathway"/>
    <property type="evidence" value="ECO:0000250"/>
    <property type="project" value="BHF-UCL"/>
</dbReference>
<dbReference type="GO" id="GO:0006006">
    <property type="term" value="P:glucose metabolic process"/>
    <property type="evidence" value="ECO:0007669"/>
    <property type="project" value="Ensembl"/>
</dbReference>
<dbReference type="GO" id="GO:0030073">
    <property type="term" value="P:insulin secretion"/>
    <property type="evidence" value="ECO:0000314"/>
    <property type="project" value="BHF-UCL"/>
</dbReference>
<dbReference type="GO" id="GO:0070059">
    <property type="term" value="P:intrinsic apoptotic signaling pathway in response to endoplasmic reticulum stress"/>
    <property type="evidence" value="ECO:0007669"/>
    <property type="project" value="Ensembl"/>
</dbReference>
<dbReference type="GO" id="GO:0001889">
    <property type="term" value="P:liver development"/>
    <property type="evidence" value="ECO:0007669"/>
    <property type="project" value="Ensembl"/>
</dbReference>
<dbReference type="GO" id="GO:0016331">
    <property type="term" value="P:morphogenesis of embryonic epithelium"/>
    <property type="evidence" value="ECO:0007669"/>
    <property type="project" value="Ensembl"/>
</dbReference>
<dbReference type="GO" id="GO:1902236">
    <property type="term" value="P:negative regulation of endoplasmic reticulum stress-induced intrinsic apoptotic signaling pathway"/>
    <property type="evidence" value="ECO:0007669"/>
    <property type="project" value="Ensembl"/>
</dbReference>
<dbReference type="GO" id="GO:0050680">
    <property type="term" value="P:negative regulation of epithelial cell proliferation"/>
    <property type="evidence" value="ECO:0007669"/>
    <property type="project" value="Ensembl"/>
</dbReference>
<dbReference type="GO" id="GO:0000122">
    <property type="term" value="P:negative regulation of transcription by RNA polymerase II"/>
    <property type="evidence" value="ECO:0007669"/>
    <property type="project" value="Ensembl"/>
</dbReference>
<dbReference type="GO" id="GO:2000675">
    <property type="term" value="P:negative regulation of type B pancreatic cell apoptotic process"/>
    <property type="evidence" value="ECO:0007669"/>
    <property type="project" value="Ensembl"/>
</dbReference>
<dbReference type="GO" id="GO:0032024">
    <property type="term" value="P:positive regulation of insulin secretion"/>
    <property type="evidence" value="ECO:0000250"/>
    <property type="project" value="UniProtKB"/>
</dbReference>
<dbReference type="GO" id="GO:0035774">
    <property type="term" value="P:positive regulation of insulin secretion involved in cellular response to glucose stimulus"/>
    <property type="evidence" value="ECO:0007669"/>
    <property type="project" value="Ensembl"/>
</dbReference>
<dbReference type="GO" id="GO:0045944">
    <property type="term" value="P:positive regulation of transcription by RNA polymerase II"/>
    <property type="evidence" value="ECO:0000314"/>
    <property type="project" value="BHF-UCL"/>
</dbReference>
<dbReference type="GO" id="GO:1904692">
    <property type="term" value="P:positive regulation of type B pancreatic cell proliferation"/>
    <property type="evidence" value="ECO:0007669"/>
    <property type="project" value="Ensembl"/>
</dbReference>
<dbReference type="GO" id="GO:0006357">
    <property type="term" value="P:regulation of transcription by RNA polymerase II"/>
    <property type="evidence" value="ECO:0000318"/>
    <property type="project" value="GO_Central"/>
</dbReference>
<dbReference type="GO" id="GO:0043279">
    <property type="term" value="P:response to alkaloid"/>
    <property type="evidence" value="ECO:0007669"/>
    <property type="project" value="Ensembl"/>
</dbReference>
<dbReference type="GO" id="GO:0010157">
    <property type="term" value="P:response to chlorate"/>
    <property type="evidence" value="ECO:0007669"/>
    <property type="project" value="Ensembl"/>
</dbReference>
<dbReference type="GO" id="GO:0034097">
    <property type="term" value="P:response to cytokine"/>
    <property type="evidence" value="ECO:0007669"/>
    <property type="project" value="Ensembl"/>
</dbReference>
<dbReference type="GO" id="GO:0070542">
    <property type="term" value="P:response to fatty acid"/>
    <property type="evidence" value="ECO:0007669"/>
    <property type="project" value="Ensembl"/>
</dbReference>
<dbReference type="GO" id="GO:0051384">
    <property type="term" value="P:response to glucocorticoid"/>
    <property type="evidence" value="ECO:0007669"/>
    <property type="project" value="Ensembl"/>
</dbReference>
<dbReference type="GO" id="GO:0010040">
    <property type="term" value="P:response to iron(II) ion"/>
    <property type="evidence" value="ECO:0007669"/>
    <property type="project" value="Ensembl"/>
</dbReference>
<dbReference type="GO" id="GO:0043201">
    <property type="term" value="P:response to L-leucine"/>
    <property type="evidence" value="ECO:0007669"/>
    <property type="project" value="Ensembl"/>
</dbReference>
<dbReference type="GO" id="GO:0035094">
    <property type="term" value="P:response to nicotine"/>
    <property type="evidence" value="ECO:0007669"/>
    <property type="project" value="Ensembl"/>
</dbReference>
<dbReference type="GO" id="GO:0033273">
    <property type="term" value="P:response to vitamin"/>
    <property type="evidence" value="ECO:0007669"/>
    <property type="project" value="Ensembl"/>
</dbReference>
<dbReference type="GO" id="GO:0009410">
    <property type="term" value="P:response to xenobiotic stimulus"/>
    <property type="evidence" value="ECO:0007669"/>
    <property type="project" value="Ensembl"/>
</dbReference>
<dbReference type="GO" id="GO:0007224">
    <property type="term" value="P:smoothened signaling pathway"/>
    <property type="evidence" value="ECO:0007669"/>
    <property type="project" value="Ensembl"/>
</dbReference>
<dbReference type="GO" id="GO:0048863">
    <property type="term" value="P:stem cell differentiation"/>
    <property type="evidence" value="ECO:0007669"/>
    <property type="project" value="Ensembl"/>
</dbReference>
<dbReference type="GO" id="GO:0006366">
    <property type="term" value="P:transcription by RNA polymerase II"/>
    <property type="evidence" value="ECO:0000304"/>
    <property type="project" value="ProtInc"/>
</dbReference>
<dbReference type="GO" id="GO:0060290">
    <property type="term" value="P:transdifferentiation"/>
    <property type="evidence" value="ECO:0007669"/>
    <property type="project" value="Ensembl"/>
</dbReference>
<dbReference type="GO" id="GO:0097050">
    <property type="term" value="P:type B pancreatic cell apoptotic process"/>
    <property type="evidence" value="ECO:0007669"/>
    <property type="project" value="Ensembl"/>
</dbReference>
<dbReference type="GO" id="GO:0003309">
    <property type="term" value="P:type B pancreatic cell differentiation"/>
    <property type="evidence" value="ECO:0000314"/>
    <property type="project" value="BHF-UCL"/>
</dbReference>
<dbReference type="GO" id="GO:0044342">
    <property type="term" value="P:type B pancreatic cell proliferation"/>
    <property type="evidence" value="ECO:0007669"/>
    <property type="project" value="Ensembl"/>
</dbReference>
<dbReference type="CDD" id="cd00086">
    <property type="entry name" value="homeodomain"/>
    <property type="match status" value="1"/>
</dbReference>
<dbReference type="DisProt" id="DP01597"/>
<dbReference type="FunFam" id="1.10.10.60:FF:000176">
    <property type="entry name" value="pancreas/duodenum homeobox protein 1"/>
    <property type="match status" value="1"/>
</dbReference>
<dbReference type="Gene3D" id="1.10.10.60">
    <property type="entry name" value="Homeodomain-like"/>
    <property type="match status" value="1"/>
</dbReference>
<dbReference type="InterPro" id="IPR001356">
    <property type="entry name" value="HD"/>
</dbReference>
<dbReference type="InterPro" id="IPR020479">
    <property type="entry name" value="HD_metazoa"/>
</dbReference>
<dbReference type="InterPro" id="IPR017995">
    <property type="entry name" value="Homeobox_antennapedia"/>
</dbReference>
<dbReference type="InterPro" id="IPR017970">
    <property type="entry name" value="Homeobox_CS"/>
</dbReference>
<dbReference type="InterPro" id="IPR009057">
    <property type="entry name" value="Homeodomain-like_sf"/>
</dbReference>
<dbReference type="PANTHER" id="PTHR45664:SF12">
    <property type="entry name" value="PANCREAS_DUODENUM HOMEOBOX PROTEIN 1"/>
    <property type="match status" value="1"/>
</dbReference>
<dbReference type="PANTHER" id="PTHR45664">
    <property type="entry name" value="PROTEIN ZERKNUELLT 1-RELATED"/>
    <property type="match status" value="1"/>
</dbReference>
<dbReference type="Pfam" id="PF00046">
    <property type="entry name" value="Homeodomain"/>
    <property type="match status" value="1"/>
</dbReference>
<dbReference type="PRINTS" id="PR00025">
    <property type="entry name" value="ANTENNAPEDIA"/>
</dbReference>
<dbReference type="PRINTS" id="PR00024">
    <property type="entry name" value="HOMEOBOX"/>
</dbReference>
<dbReference type="SMART" id="SM00389">
    <property type="entry name" value="HOX"/>
    <property type="match status" value="1"/>
</dbReference>
<dbReference type="SUPFAM" id="SSF46689">
    <property type="entry name" value="Homeodomain-like"/>
    <property type="match status" value="1"/>
</dbReference>
<dbReference type="PROSITE" id="PS00027">
    <property type="entry name" value="HOMEOBOX_1"/>
    <property type="match status" value="1"/>
</dbReference>
<dbReference type="PROSITE" id="PS50071">
    <property type="entry name" value="HOMEOBOX_2"/>
    <property type="match status" value="1"/>
</dbReference>